<name>XPT2_CLOB1</name>
<comment type="function">
    <text evidence="1">Converts the preformed base xanthine, a product of nucleic acid breakdown, to xanthosine 5'-monophosphate (XMP), so it can be reused for RNA or DNA synthesis.</text>
</comment>
<comment type="catalytic activity">
    <reaction evidence="1">
        <text>XMP + diphosphate = xanthine + 5-phospho-alpha-D-ribose 1-diphosphate</text>
        <dbReference type="Rhea" id="RHEA:10800"/>
        <dbReference type="ChEBI" id="CHEBI:17712"/>
        <dbReference type="ChEBI" id="CHEBI:33019"/>
        <dbReference type="ChEBI" id="CHEBI:57464"/>
        <dbReference type="ChEBI" id="CHEBI:58017"/>
        <dbReference type="EC" id="2.4.2.22"/>
    </reaction>
</comment>
<comment type="pathway">
    <text evidence="1">Purine metabolism; XMP biosynthesis via salvage pathway; XMP from xanthine: step 1/1.</text>
</comment>
<comment type="subunit">
    <text evidence="1">Homodimer.</text>
</comment>
<comment type="subcellular location">
    <subcellularLocation>
        <location evidence="1">Cytoplasm</location>
    </subcellularLocation>
</comment>
<comment type="similarity">
    <text evidence="1">Belongs to the purine/pyrimidine phosphoribosyltransferase family. Xpt subfamily.</text>
</comment>
<keyword id="KW-0963">Cytoplasm</keyword>
<keyword id="KW-0328">Glycosyltransferase</keyword>
<keyword id="KW-0660">Purine salvage</keyword>
<keyword id="KW-0808">Transferase</keyword>
<evidence type="ECO:0000255" key="1">
    <source>
        <dbReference type="HAMAP-Rule" id="MF_01184"/>
    </source>
</evidence>
<protein>
    <recommendedName>
        <fullName evidence="1">Xanthine phosphoribosyltransferase 2</fullName>
        <shortName evidence="1">XPRTase 2</shortName>
        <ecNumber evidence="1">2.4.2.22</ecNumber>
    </recommendedName>
</protein>
<gene>
    <name evidence="1" type="primary">xpt2</name>
    <name type="ordered locus">CLB_1176</name>
</gene>
<sequence length="190" mass="21240">MKLLEDKILKEGILLEGNILKVDSFLNHQMDVKLFNEIGKEFKRRFEGCSINKILTIEASGIGIATIVSQYFDFCPVVFAKKVDAANMDKDTYESKVHSFTKNKTYNVRVSKKYINKGDKILLIDDFLANGCAALGLIDIIKQGGAELIGVGIAIEKGFQKGRKELEKVGAKVESLAILDKIENDKVYFK</sequence>
<accession>A7FT29</accession>
<feature type="chain" id="PRO_0000339680" description="Xanthine phosphoribosyltransferase 2">
    <location>
        <begin position="1"/>
        <end position="190"/>
    </location>
</feature>
<feature type="binding site" evidence="1">
    <location>
        <position position="20"/>
    </location>
    <ligand>
        <name>xanthine</name>
        <dbReference type="ChEBI" id="CHEBI:17712"/>
    </ligand>
</feature>
<feature type="binding site" evidence="1">
    <location>
        <position position="27"/>
    </location>
    <ligand>
        <name>xanthine</name>
        <dbReference type="ChEBI" id="CHEBI:17712"/>
    </ligand>
</feature>
<feature type="binding site" evidence="1">
    <location>
        <begin position="129"/>
        <end position="133"/>
    </location>
    <ligand>
        <name>5-phospho-alpha-D-ribose 1-diphosphate</name>
        <dbReference type="ChEBI" id="CHEBI:58017"/>
    </ligand>
</feature>
<feature type="binding site" evidence="1">
    <location>
        <position position="157"/>
    </location>
    <ligand>
        <name>xanthine</name>
        <dbReference type="ChEBI" id="CHEBI:17712"/>
    </ligand>
</feature>
<reference key="1">
    <citation type="journal article" date="2007" name="PLoS ONE">
        <title>Analysis of the neurotoxin complex genes in Clostridium botulinum A1-A4 and B1 strains: BoNT/A3, /Ba4 and /B1 clusters are located within plasmids.</title>
        <authorList>
            <person name="Smith T.J."/>
            <person name="Hill K.K."/>
            <person name="Foley B.T."/>
            <person name="Detter J.C."/>
            <person name="Munk A.C."/>
            <person name="Bruce D.C."/>
            <person name="Doggett N.A."/>
            <person name="Smith L.A."/>
            <person name="Marks J.D."/>
            <person name="Xie G."/>
            <person name="Brettin T.S."/>
        </authorList>
    </citation>
    <scope>NUCLEOTIDE SEQUENCE [LARGE SCALE GENOMIC DNA]</scope>
    <source>
        <strain>ATCC 19397 / Type A</strain>
    </source>
</reference>
<organism>
    <name type="scientific">Clostridium botulinum (strain ATCC 19397 / Type A)</name>
    <dbReference type="NCBI Taxonomy" id="441770"/>
    <lineage>
        <taxon>Bacteria</taxon>
        <taxon>Bacillati</taxon>
        <taxon>Bacillota</taxon>
        <taxon>Clostridia</taxon>
        <taxon>Eubacteriales</taxon>
        <taxon>Clostridiaceae</taxon>
        <taxon>Clostridium</taxon>
    </lineage>
</organism>
<dbReference type="EC" id="2.4.2.22" evidence="1"/>
<dbReference type="EMBL" id="CP000726">
    <property type="protein sequence ID" value="ABS34851.1"/>
    <property type="molecule type" value="Genomic_DNA"/>
</dbReference>
<dbReference type="RefSeq" id="WP_011948791.1">
    <property type="nucleotide sequence ID" value="NC_009697.1"/>
</dbReference>
<dbReference type="SMR" id="A7FT29"/>
<dbReference type="KEGG" id="cba:CLB_1176"/>
<dbReference type="HOGENOM" id="CLU_099015_0_0_9"/>
<dbReference type="UniPathway" id="UPA00602">
    <property type="reaction ID" value="UER00658"/>
</dbReference>
<dbReference type="GO" id="GO:0005737">
    <property type="term" value="C:cytoplasm"/>
    <property type="evidence" value="ECO:0007669"/>
    <property type="project" value="UniProtKB-SubCell"/>
</dbReference>
<dbReference type="GO" id="GO:0000310">
    <property type="term" value="F:xanthine phosphoribosyltransferase activity"/>
    <property type="evidence" value="ECO:0007669"/>
    <property type="project" value="UniProtKB-UniRule"/>
</dbReference>
<dbReference type="GO" id="GO:0006166">
    <property type="term" value="P:purine ribonucleoside salvage"/>
    <property type="evidence" value="ECO:0007669"/>
    <property type="project" value="UniProtKB-KW"/>
</dbReference>
<dbReference type="GO" id="GO:0046110">
    <property type="term" value="P:xanthine metabolic process"/>
    <property type="evidence" value="ECO:0007669"/>
    <property type="project" value="InterPro"/>
</dbReference>
<dbReference type="GO" id="GO:0032265">
    <property type="term" value="P:XMP salvage"/>
    <property type="evidence" value="ECO:0007669"/>
    <property type="project" value="UniProtKB-UniRule"/>
</dbReference>
<dbReference type="CDD" id="cd06223">
    <property type="entry name" value="PRTases_typeI"/>
    <property type="match status" value="1"/>
</dbReference>
<dbReference type="Gene3D" id="3.40.50.2020">
    <property type="match status" value="1"/>
</dbReference>
<dbReference type="HAMAP" id="MF_01184">
    <property type="entry name" value="XPRTase"/>
    <property type="match status" value="1"/>
</dbReference>
<dbReference type="InterPro" id="IPR000836">
    <property type="entry name" value="PRibTrfase_dom"/>
</dbReference>
<dbReference type="InterPro" id="IPR029057">
    <property type="entry name" value="PRTase-like"/>
</dbReference>
<dbReference type="InterPro" id="IPR050118">
    <property type="entry name" value="Pur/Pyrimidine_PRTase"/>
</dbReference>
<dbReference type="InterPro" id="IPR010079">
    <property type="entry name" value="Xanthine_PRibTrfase"/>
</dbReference>
<dbReference type="NCBIfam" id="NF006671">
    <property type="entry name" value="PRK09219.1"/>
    <property type="match status" value="1"/>
</dbReference>
<dbReference type="NCBIfam" id="TIGR01744">
    <property type="entry name" value="XPRTase"/>
    <property type="match status" value="1"/>
</dbReference>
<dbReference type="PANTHER" id="PTHR43864">
    <property type="entry name" value="HYPOXANTHINE/GUANINE PHOSPHORIBOSYLTRANSFERASE"/>
    <property type="match status" value="1"/>
</dbReference>
<dbReference type="PANTHER" id="PTHR43864:SF1">
    <property type="entry name" value="XANTHINE PHOSPHORIBOSYLTRANSFERASE"/>
    <property type="match status" value="1"/>
</dbReference>
<dbReference type="Pfam" id="PF00156">
    <property type="entry name" value="Pribosyltran"/>
    <property type="match status" value="1"/>
</dbReference>
<dbReference type="SUPFAM" id="SSF53271">
    <property type="entry name" value="PRTase-like"/>
    <property type="match status" value="1"/>
</dbReference>
<proteinExistence type="inferred from homology"/>